<name>RHVI2_ROSHC</name>
<reference key="1">
    <citation type="journal article" date="2012" name="Plant Cell Physiol.">
        <title>Insight into the role of sugars in bud burst under light in the rose.</title>
        <authorList>
            <person name="Rabot A."/>
            <person name="Henry C."/>
            <person name="Ben Baaziz K."/>
            <person name="Mortreau E."/>
            <person name="Azri W."/>
            <person name="Lothier J."/>
            <person name="Hamama L."/>
            <person name="Boummaza R."/>
            <person name="Leduc N."/>
            <person name="Pelleschi-Travier S."/>
            <person name="Le Gourrierec J."/>
            <person name="Sakr S."/>
        </authorList>
    </citation>
    <scope>NUCLEOTIDE SEQUENCE [MRNA]</scope>
    <scope>FUNCTION</scope>
    <scope>TISSUE SPECIFICITY</scope>
    <scope>LACK OF INDUCTION BY LIGHT</scope>
</reference>
<reference key="2">
    <citation type="journal article" date="2016" name="J. Exp. Bot.">
        <title>RhVI1 is a membrane-anchored vacuolar invertase highly expressed in Rosa hybrida L. petals.</title>
        <authorList>
            <person name="Farci D."/>
            <person name="Collu G."/>
            <person name="Kirkpatrick J."/>
            <person name="Esposito F."/>
            <person name="Piano D."/>
        </authorList>
    </citation>
    <scope>SUBCELLULAR LOCATION</scope>
</reference>
<proteinExistence type="evidence at transcript level"/>
<evidence type="ECO:0000250" key="1">
    <source>
        <dbReference type="UniProtKB" id="H2DF87"/>
    </source>
</evidence>
<evidence type="ECO:0000250" key="2">
    <source>
        <dbReference type="UniProtKB" id="Q43866"/>
    </source>
</evidence>
<evidence type="ECO:0000255" key="3"/>
<evidence type="ECO:0000255" key="4">
    <source>
        <dbReference type="PROSITE-ProRule" id="PRU10067"/>
    </source>
</evidence>
<evidence type="ECO:0000256" key="5">
    <source>
        <dbReference type="SAM" id="MobiDB-lite"/>
    </source>
</evidence>
<evidence type="ECO:0000269" key="6">
    <source>
    </source>
</evidence>
<evidence type="ECO:0000269" key="7">
    <source>
    </source>
</evidence>
<evidence type="ECO:0000303" key="8">
    <source>
    </source>
</evidence>
<evidence type="ECO:0000305" key="9"/>
<evidence type="ECO:0000305" key="10">
    <source>
    </source>
</evidence>
<evidence type="ECO:0000312" key="11">
    <source>
        <dbReference type="EMBL" id="AEY79730.1"/>
    </source>
</evidence>
<protein>
    <recommendedName>
        <fullName evidence="9">Acid beta-fructofuranosidase 2, vacuolar</fullName>
        <ecNumber evidence="6">3.2.1.26</ecNumber>
    </recommendedName>
    <alternativeName>
        <fullName evidence="8">Vacuolar invertase 2</fullName>
        <shortName evidence="8">RvVI2</shortName>
    </alternativeName>
</protein>
<keyword id="KW-1015">Disulfide bond</keyword>
<keyword id="KW-0326">Glycosidase</keyword>
<keyword id="KW-0378">Hydrolase</keyword>
<keyword id="KW-0472">Membrane</keyword>
<keyword id="KW-0812">Transmembrane</keyword>
<keyword id="KW-1133">Transmembrane helix</keyword>
<keyword id="KW-0926">Vacuole</keyword>
<keyword id="KW-0865">Zymogen</keyword>
<accession>H2DF88</accession>
<dbReference type="EC" id="3.2.1.26" evidence="6"/>
<dbReference type="EMBL" id="JN592033">
    <property type="protein sequence ID" value="AEY79730.1"/>
    <property type="molecule type" value="mRNA"/>
</dbReference>
<dbReference type="SMR" id="H2DF88"/>
<dbReference type="GO" id="GO:0005774">
    <property type="term" value="C:vacuolar membrane"/>
    <property type="evidence" value="ECO:0007669"/>
    <property type="project" value="UniProtKB-SubCell"/>
</dbReference>
<dbReference type="GO" id="GO:0004564">
    <property type="term" value="F:beta-fructofuranosidase activity"/>
    <property type="evidence" value="ECO:0007669"/>
    <property type="project" value="UniProtKB-EC"/>
</dbReference>
<dbReference type="GO" id="GO:0005975">
    <property type="term" value="P:carbohydrate metabolic process"/>
    <property type="evidence" value="ECO:0007669"/>
    <property type="project" value="InterPro"/>
</dbReference>
<dbReference type="CDD" id="cd18624">
    <property type="entry name" value="GH32_Fruct1-like"/>
    <property type="match status" value="1"/>
</dbReference>
<dbReference type="FunFam" id="2.115.10.20:FF:000001">
    <property type="entry name" value="Beta-fructofuranosidase, insoluble isoenzyme CWINV1"/>
    <property type="match status" value="1"/>
</dbReference>
<dbReference type="FunFam" id="2.60.120.560:FF:000002">
    <property type="entry name" value="Beta-fructofuranosidase, insoluble isoenzyme CWINV1"/>
    <property type="match status" value="1"/>
</dbReference>
<dbReference type="Gene3D" id="2.60.120.560">
    <property type="entry name" value="Exo-inulinase, domain 1"/>
    <property type="match status" value="1"/>
</dbReference>
<dbReference type="Gene3D" id="2.115.10.20">
    <property type="entry name" value="Glycosyl hydrolase domain, family 43"/>
    <property type="match status" value="1"/>
</dbReference>
<dbReference type="InterPro" id="IPR013320">
    <property type="entry name" value="ConA-like_dom_sf"/>
</dbReference>
<dbReference type="InterPro" id="IPR050551">
    <property type="entry name" value="Fructan_Metab_Enzymes"/>
</dbReference>
<dbReference type="InterPro" id="IPR001362">
    <property type="entry name" value="Glyco_hydro_32"/>
</dbReference>
<dbReference type="InterPro" id="IPR018053">
    <property type="entry name" value="Glyco_hydro_32_AS"/>
</dbReference>
<dbReference type="InterPro" id="IPR013189">
    <property type="entry name" value="Glyco_hydro_32_C"/>
</dbReference>
<dbReference type="InterPro" id="IPR013148">
    <property type="entry name" value="Glyco_hydro_32_N"/>
</dbReference>
<dbReference type="InterPro" id="IPR023296">
    <property type="entry name" value="Glyco_hydro_beta-prop_sf"/>
</dbReference>
<dbReference type="PANTHER" id="PTHR31953">
    <property type="entry name" value="BETA-FRUCTOFURANOSIDASE, INSOLUBLE ISOENZYME CWINV1-RELATED"/>
    <property type="match status" value="1"/>
</dbReference>
<dbReference type="Pfam" id="PF08244">
    <property type="entry name" value="Glyco_hydro_32C"/>
    <property type="match status" value="1"/>
</dbReference>
<dbReference type="Pfam" id="PF00251">
    <property type="entry name" value="Glyco_hydro_32N"/>
    <property type="match status" value="1"/>
</dbReference>
<dbReference type="SMART" id="SM00640">
    <property type="entry name" value="Glyco_32"/>
    <property type="match status" value="1"/>
</dbReference>
<dbReference type="SUPFAM" id="SSF75005">
    <property type="entry name" value="Arabinanase/levansucrase/invertase"/>
    <property type="match status" value="1"/>
</dbReference>
<dbReference type="SUPFAM" id="SSF49899">
    <property type="entry name" value="Concanavalin A-like lectins/glucanases"/>
    <property type="match status" value="1"/>
</dbReference>
<dbReference type="PROSITE" id="PS00609">
    <property type="entry name" value="GLYCOSYL_HYDROL_F32"/>
    <property type="match status" value="1"/>
</dbReference>
<organism evidence="11">
    <name type="scientific">Rosa hybrid cultivar</name>
    <dbReference type="NCBI Taxonomy" id="128735"/>
    <lineage>
        <taxon>Eukaryota</taxon>
        <taxon>Viridiplantae</taxon>
        <taxon>Streptophyta</taxon>
        <taxon>Embryophyta</taxon>
        <taxon>Tracheophyta</taxon>
        <taxon>Spermatophyta</taxon>
        <taxon>Magnoliopsida</taxon>
        <taxon>eudicotyledons</taxon>
        <taxon>Gunneridae</taxon>
        <taxon>Pentapetalae</taxon>
        <taxon>rosids</taxon>
        <taxon>fabids</taxon>
        <taxon>Rosales</taxon>
        <taxon>Rosaceae</taxon>
        <taxon>Rosoideae</taxon>
        <taxon>Rosoideae incertae sedis</taxon>
        <taxon>Rosa</taxon>
    </lineage>
</organism>
<feature type="propeptide" id="PRO_0000438792" description="Removed in mature form" evidence="1">
    <location>
        <begin position="1"/>
        <end position="78"/>
    </location>
</feature>
<feature type="chain" id="PRO_0000438793" description="Acid beta-fructofuranosidase 2, vacuolar">
    <location>
        <begin position="79"/>
        <end position="640"/>
    </location>
</feature>
<feature type="topological domain" description="Cytoplasmic" evidence="9">
    <location>
        <begin position="1"/>
        <end position="29"/>
    </location>
</feature>
<feature type="transmembrane region" description="Helical" evidence="3">
    <location>
        <begin position="30"/>
        <end position="49"/>
    </location>
</feature>
<feature type="topological domain" description="Lumenal" evidence="9">
    <location>
        <begin position="50"/>
        <end position="616"/>
    </location>
</feature>
<feature type="transmembrane region" description="Helical" evidence="3">
    <location>
        <begin position="617"/>
        <end position="639"/>
    </location>
</feature>
<feature type="topological domain" description="Cytoplasmic" evidence="9">
    <location>
        <position position="640"/>
    </location>
</feature>
<feature type="region of interest" description="Disordered" evidence="5">
    <location>
        <begin position="1"/>
        <end position="22"/>
    </location>
</feature>
<feature type="active site" evidence="4">
    <location>
        <position position="96"/>
    </location>
</feature>
<feature type="binding site" evidence="2">
    <location>
        <begin position="93"/>
        <end position="96"/>
    </location>
    <ligand>
        <name>substrate</name>
    </ligand>
</feature>
<feature type="binding site" evidence="2">
    <location>
        <position position="112"/>
    </location>
    <ligand>
        <name>substrate</name>
    </ligand>
</feature>
<feature type="binding site" evidence="2">
    <location>
        <position position="120"/>
    </location>
    <ligand>
        <name>substrate</name>
    </ligand>
</feature>
<feature type="binding site" evidence="2">
    <location>
        <begin position="155"/>
        <end position="156"/>
    </location>
    <ligand>
        <name>substrate</name>
    </ligand>
</feature>
<feature type="binding site" evidence="2">
    <location>
        <begin position="219"/>
        <end position="220"/>
    </location>
    <ligand>
        <name>substrate</name>
    </ligand>
</feature>
<feature type="binding site" evidence="2">
    <location>
        <position position="274"/>
    </location>
    <ligand>
        <name>substrate</name>
    </ligand>
</feature>
<feature type="binding site" evidence="2">
    <location>
        <position position="307"/>
    </location>
    <ligand>
        <name>substrate</name>
    </ligand>
</feature>
<feature type="disulfide bond" evidence="2">
    <location>
        <begin position="464"/>
        <end position="512"/>
    </location>
</feature>
<sequence length="640" mass="71647">MDTNTTSYTPLPGDPFLSGPPETPRRPLKGFAVIFASVIFLMSLVALIIHQGPQQPPDVMPDKQDEHHHPQSTTNTMLSWQRTAFHFQPEKNWMNDPNGPMYYKGWYHFFYQYNPRGAVWGNIVWGHAVSRDLIHWLHLPLAMVADQWYDINGVWTGSATILPNDQIVMLYTGSTNESVQVQCLAYPADHKDPLLTKWVKYSGNPVLVPPPGIGVKDFRDPTTAWYITEGKWRITIGSKVNKTGISLVYDTKDFIKYEQLDGVLHAVPGTGMWECIDFYPVSKTSDKGLDTSQNGADVKHVMKASLDDDRNDYYALGSYNEKTGKWVPDNQKIDVGIGIRYDYGKFYASKTFYDQNKQRRVLWGWIGESDSENADVKKGWASLQGIPRTVLFDQKTGSNLLQWPVEEIEKLRLNKKNFDKVQVKAGSVVPLDVGTATQLDIVAEFQLDQKVVESAAETNEEFSCQTSGGAAKRGALGPFGLLVLADDSLSERTPVYFYVVKGSGGTVNTYFCADQTRSSVATDVVKQVSGSYVPVLKGETLSLRILVDHSIIESFAQGGRTTITTRVYPTQAIYGAARLFLFNNATDTSFTASLQIWQMNSAFIRPFSPDAASHSSFTPVTVFIKFIVPFGIFLTLYFVR</sequence>
<comment type="function">
    <text evidence="6">Vacuolar invertase.</text>
</comment>
<comment type="catalytic activity">
    <reaction evidence="6">
        <text>Hydrolysis of terminal non-reducing beta-D-fructofuranoside residues in beta-D-fructofuranosides.</text>
        <dbReference type="EC" id="3.2.1.26"/>
    </reaction>
</comment>
<comment type="subcellular location">
    <subcellularLocation>
        <location evidence="7">Membrane</location>
        <topology evidence="3">Multi-pass membrane protein</topology>
    </subcellularLocation>
    <subcellularLocation>
        <location evidence="9">Vacuole membrane</location>
        <topology evidence="9">Single-pass membrane protein</topology>
    </subcellularLocation>
    <text evidence="10">After the proteolytic cleavage of the propeptide, the protein should stay anchored to the vacuolar membrane on its vacuolar side.</text>
</comment>
<comment type="tissue specificity">
    <text evidence="6">Expressed in buds, stems, roots and leaves.</text>
</comment>
<comment type="induction">
    <text evidence="6">Not regulated by light during bud burst.</text>
</comment>
<comment type="similarity">
    <text evidence="9">Belongs to the glycosyl hydrolase 32 family.</text>
</comment>